<gene>
    <name evidence="1" type="primary">nuoD</name>
    <name type="ordered locus">XCC2525</name>
</gene>
<organism>
    <name type="scientific">Xanthomonas campestris pv. campestris (strain ATCC 33913 / DSM 3586 / NCPPB 528 / LMG 568 / P 25)</name>
    <dbReference type="NCBI Taxonomy" id="190485"/>
    <lineage>
        <taxon>Bacteria</taxon>
        <taxon>Pseudomonadati</taxon>
        <taxon>Pseudomonadota</taxon>
        <taxon>Gammaproteobacteria</taxon>
        <taxon>Lysobacterales</taxon>
        <taxon>Lysobacteraceae</taxon>
        <taxon>Xanthomonas</taxon>
    </lineage>
</organism>
<feature type="chain" id="PRO_0000371949" description="NADH-quinone oxidoreductase subunit D">
    <location>
        <begin position="1"/>
        <end position="435"/>
    </location>
</feature>
<protein>
    <recommendedName>
        <fullName evidence="1">NADH-quinone oxidoreductase subunit D</fullName>
        <ecNumber evidence="1">7.1.1.-</ecNumber>
    </recommendedName>
    <alternativeName>
        <fullName evidence="1">NADH dehydrogenase I subunit D</fullName>
    </alternativeName>
    <alternativeName>
        <fullName evidence="1">NDH-1 subunit D</fullName>
    </alternativeName>
</protein>
<accession>Q8P7T5</accession>
<keyword id="KW-0997">Cell inner membrane</keyword>
<keyword id="KW-1003">Cell membrane</keyword>
<keyword id="KW-0472">Membrane</keyword>
<keyword id="KW-0520">NAD</keyword>
<keyword id="KW-0874">Quinone</keyword>
<keyword id="KW-1185">Reference proteome</keyword>
<keyword id="KW-1278">Translocase</keyword>
<keyword id="KW-0813">Transport</keyword>
<keyword id="KW-0830">Ubiquinone</keyword>
<evidence type="ECO:0000255" key="1">
    <source>
        <dbReference type="HAMAP-Rule" id="MF_01358"/>
    </source>
</evidence>
<reference key="1">
    <citation type="journal article" date="2002" name="Nature">
        <title>Comparison of the genomes of two Xanthomonas pathogens with differing host specificities.</title>
        <authorList>
            <person name="da Silva A.C.R."/>
            <person name="Ferro J.A."/>
            <person name="Reinach F.C."/>
            <person name="Farah C.S."/>
            <person name="Furlan L.R."/>
            <person name="Quaggio R.B."/>
            <person name="Monteiro-Vitorello C.B."/>
            <person name="Van Sluys M.A."/>
            <person name="Almeida N.F. Jr."/>
            <person name="Alves L.M.C."/>
            <person name="do Amaral A.M."/>
            <person name="Bertolini M.C."/>
            <person name="Camargo L.E.A."/>
            <person name="Camarotte G."/>
            <person name="Cannavan F."/>
            <person name="Cardozo J."/>
            <person name="Chambergo F."/>
            <person name="Ciapina L.P."/>
            <person name="Cicarelli R.M.B."/>
            <person name="Coutinho L.L."/>
            <person name="Cursino-Santos J.R."/>
            <person name="El-Dorry H."/>
            <person name="Faria J.B."/>
            <person name="Ferreira A.J.S."/>
            <person name="Ferreira R.C.C."/>
            <person name="Ferro M.I.T."/>
            <person name="Formighieri E.F."/>
            <person name="Franco M.C."/>
            <person name="Greggio C.C."/>
            <person name="Gruber A."/>
            <person name="Katsuyama A.M."/>
            <person name="Kishi L.T."/>
            <person name="Leite R.P."/>
            <person name="Lemos E.G.M."/>
            <person name="Lemos M.V.F."/>
            <person name="Locali E.C."/>
            <person name="Machado M.A."/>
            <person name="Madeira A.M.B.N."/>
            <person name="Martinez-Rossi N.M."/>
            <person name="Martins E.C."/>
            <person name="Meidanis J."/>
            <person name="Menck C.F.M."/>
            <person name="Miyaki C.Y."/>
            <person name="Moon D.H."/>
            <person name="Moreira L.M."/>
            <person name="Novo M.T.M."/>
            <person name="Okura V.K."/>
            <person name="Oliveira M.C."/>
            <person name="Oliveira V.R."/>
            <person name="Pereira H.A."/>
            <person name="Rossi A."/>
            <person name="Sena J.A.D."/>
            <person name="Silva C."/>
            <person name="de Souza R.F."/>
            <person name="Spinola L.A.F."/>
            <person name="Takita M.A."/>
            <person name="Tamura R.E."/>
            <person name="Teixeira E.C."/>
            <person name="Tezza R.I.D."/>
            <person name="Trindade dos Santos M."/>
            <person name="Truffi D."/>
            <person name="Tsai S.M."/>
            <person name="White F.F."/>
            <person name="Setubal J.C."/>
            <person name="Kitajima J.P."/>
        </authorList>
    </citation>
    <scope>NUCLEOTIDE SEQUENCE [LARGE SCALE GENOMIC DNA]</scope>
    <source>
        <strain>ATCC 33913 / DSM 3586 / NCPPB 528 / LMG 568 / P 25</strain>
    </source>
</reference>
<comment type="function">
    <text evidence="1">NDH-1 shuttles electrons from NADH, via FMN and iron-sulfur (Fe-S) centers, to quinones in the respiratory chain. The immediate electron acceptor for the enzyme in this species is believed to be ubiquinone. Couples the redox reaction to proton translocation (for every two electrons transferred, four hydrogen ions are translocated across the cytoplasmic membrane), and thus conserves the redox energy in a proton gradient.</text>
</comment>
<comment type="catalytic activity">
    <reaction evidence="1">
        <text>a quinone + NADH + 5 H(+)(in) = a quinol + NAD(+) + 4 H(+)(out)</text>
        <dbReference type="Rhea" id="RHEA:57888"/>
        <dbReference type="ChEBI" id="CHEBI:15378"/>
        <dbReference type="ChEBI" id="CHEBI:24646"/>
        <dbReference type="ChEBI" id="CHEBI:57540"/>
        <dbReference type="ChEBI" id="CHEBI:57945"/>
        <dbReference type="ChEBI" id="CHEBI:132124"/>
    </reaction>
</comment>
<comment type="subunit">
    <text evidence="1">NDH-1 is composed of 14 different subunits. Subunits NuoB, C, D, E, F, and G constitute the peripheral sector of the complex.</text>
</comment>
<comment type="subcellular location">
    <subcellularLocation>
        <location evidence="1">Cell inner membrane</location>
        <topology evidence="1">Peripheral membrane protein</topology>
        <orientation evidence="1">Cytoplasmic side</orientation>
    </subcellularLocation>
</comment>
<comment type="similarity">
    <text evidence="1">Belongs to the complex I 49 kDa subunit family.</text>
</comment>
<name>NUOD_XANCP</name>
<proteinExistence type="inferred from homology"/>
<dbReference type="EC" id="7.1.1.-" evidence="1"/>
<dbReference type="EMBL" id="AE008922">
    <property type="protein sequence ID" value="AAM41798.1"/>
    <property type="molecule type" value="Genomic_DNA"/>
</dbReference>
<dbReference type="RefSeq" id="NP_637874.1">
    <property type="nucleotide sequence ID" value="NC_003902.1"/>
</dbReference>
<dbReference type="RefSeq" id="WP_011037656.1">
    <property type="nucleotide sequence ID" value="NC_003902.1"/>
</dbReference>
<dbReference type="SMR" id="Q8P7T5"/>
<dbReference type="STRING" id="190485.XCC2525"/>
<dbReference type="EnsemblBacteria" id="AAM41798">
    <property type="protein sequence ID" value="AAM41798"/>
    <property type="gene ID" value="XCC2525"/>
</dbReference>
<dbReference type="KEGG" id="xcc:XCC2525"/>
<dbReference type="PATRIC" id="fig|190485.4.peg.2691"/>
<dbReference type="eggNOG" id="COG0649">
    <property type="taxonomic scope" value="Bacteria"/>
</dbReference>
<dbReference type="HOGENOM" id="CLU_015134_1_1_6"/>
<dbReference type="OrthoDB" id="9801496at2"/>
<dbReference type="Proteomes" id="UP000001010">
    <property type="component" value="Chromosome"/>
</dbReference>
<dbReference type="GO" id="GO:0005886">
    <property type="term" value="C:plasma membrane"/>
    <property type="evidence" value="ECO:0007669"/>
    <property type="project" value="UniProtKB-SubCell"/>
</dbReference>
<dbReference type="GO" id="GO:0051287">
    <property type="term" value="F:NAD binding"/>
    <property type="evidence" value="ECO:0007669"/>
    <property type="project" value="InterPro"/>
</dbReference>
<dbReference type="GO" id="GO:0050136">
    <property type="term" value="F:NADH:ubiquinone reductase (non-electrogenic) activity"/>
    <property type="evidence" value="ECO:0007669"/>
    <property type="project" value="UniProtKB-UniRule"/>
</dbReference>
<dbReference type="GO" id="GO:0048038">
    <property type="term" value="F:quinone binding"/>
    <property type="evidence" value="ECO:0007669"/>
    <property type="project" value="UniProtKB-KW"/>
</dbReference>
<dbReference type="FunFam" id="1.10.645.10:FF:000005">
    <property type="entry name" value="NADH-quinone oxidoreductase subunit D"/>
    <property type="match status" value="1"/>
</dbReference>
<dbReference type="Gene3D" id="1.10.645.10">
    <property type="entry name" value="Cytochrome-c3 Hydrogenase, chain B"/>
    <property type="match status" value="1"/>
</dbReference>
<dbReference type="HAMAP" id="MF_01358">
    <property type="entry name" value="NDH1_NuoD"/>
    <property type="match status" value="1"/>
</dbReference>
<dbReference type="InterPro" id="IPR001135">
    <property type="entry name" value="NADH_Q_OxRdtase_suD"/>
</dbReference>
<dbReference type="InterPro" id="IPR014029">
    <property type="entry name" value="NADH_UbQ_OxRdtase_49kDa_CS"/>
</dbReference>
<dbReference type="InterPro" id="IPR022885">
    <property type="entry name" value="NDH1_su_D/H"/>
</dbReference>
<dbReference type="InterPro" id="IPR029014">
    <property type="entry name" value="NiFe-Hase_large"/>
</dbReference>
<dbReference type="NCBIfam" id="TIGR01962">
    <property type="entry name" value="NuoD"/>
    <property type="match status" value="1"/>
</dbReference>
<dbReference type="NCBIfam" id="NF004739">
    <property type="entry name" value="PRK06075.1"/>
    <property type="match status" value="1"/>
</dbReference>
<dbReference type="PANTHER" id="PTHR11993:SF10">
    <property type="entry name" value="NADH DEHYDROGENASE [UBIQUINONE] IRON-SULFUR PROTEIN 2, MITOCHONDRIAL"/>
    <property type="match status" value="1"/>
</dbReference>
<dbReference type="PANTHER" id="PTHR11993">
    <property type="entry name" value="NADH-UBIQUINONE OXIDOREDUCTASE 49 KDA SUBUNIT"/>
    <property type="match status" value="1"/>
</dbReference>
<dbReference type="Pfam" id="PF00346">
    <property type="entry name" value="Complex1_49kDa"/>
    <property type="match status" value="1"/>
</dbReference>
<dbReference type="SUPFAM" id="SSF56762">
    <property type="entry name" value="HydB/Nqo4-like"/>
    <property type="match status" value="1"/>
</dbReference>
<dbReference type="PROSITE" id="PS00535">
    <property type="entry name" value="COMPLEX1_49K"/>
    <property type="match status" value="1"/>
</dbReference>
<sequence>MSEYRQATDAFASNPVESKQEIRNYTMNFGPQHPAAHGVLRLILEMDGETVVRADPHIGLLHRGTEKLAESKPFNQSVPYMDRLDYVSMMCNEHAYVRAIESLMGIEAPERAQYIRTMFDEITRIKNHLMWVGSNALDLGAMAVMLYAFREREELMDVYEAVSGARMHAAYYRPGGVYRDLPDRMPKYKESRWHKGGALTKLNAAREGSMLDFLENFTDTFPSRVDEYETLLTENRIWKQRTVDVGIISPDLARAWGMTGPMLRGSGIEWDLRKKQPYAKYDAVDFDVPVGTNGDCYDRYLVRVAEMRESNRIIKQCVKWLKANPGPVMVTNFKVAPPSREGMKDDMEALIHHFKLFSEGYCVPAGETYCAVEAPKGEFGCYLMSDGANKPFRVHLRAPGFAHLSSMDAVVRGYLLADVVAMIGTYDLVFGEVDR</sequence>